<feature type="chain" id="PRO_0000283538" description="Putative F-box protein At5g39460">
    <location>
        <begin position="1"/>
        <end position="571"/>
    </location>
</feature>
<feature type="domain" description="F-box" evidence="1">
    <location>
        <begin position="9"/>
        <end position="55"/>
    </location>
</feature>
<name>FB272_ARATH</name>
<gene>
    <name type="ordered locus">At5g39460</name>
    <name type="ORF">MUL8.14</name>
</gene>
<evidence type="ECO:0000255" key="1">
    <source>
        <dbReference type="PROSITE-ProRule" id="PRU00080"/>
    </source>
</evidence>
<organism>
    <name type="scientific">Arabidopsis thaliana</name>
    <name type="common">Mouse-ear cress</name>
    <dbReference type="NCBI Taxonomy" id="3702"/>
    <lineage>
        <taxon>Eukaryota</taxon>
        <taxon>Viridiplantae</taxon>
        <taxon>Streptophyta</taxon>
        <taxon>Embryophyta</taxon>
        <taxon>Tracheophyta</taxon>
        <taxon>Spermatophyta</taxon>
        <taxon>Magnoliopsida</taxon>
        <taxon>eudicotyledons</taxon>
        <taxon>Gunneridae</taxon>
        <taxon>Pentapetalae</taxon>
        <taxon>rosids</taxon>
        <taxon>malvids</taxon>
        <taxon>Brassicales</taxon>
        <taxon>Brassicaceae</taxon>
        <taxon>Camelineae</taxon>
        <taxon>Arabidopsis</taxon>
    </lineage>
</organism>
<reference key="1">
    <citation type="journal article" date="1998" name="DNA Res.">
        <title>Structural analysis of Arabidopsis thaliana chromosome 5. IV. Sequence features of the regions of 1,456,315 bp covered by nineteen physically assigned P1 and TAC clones.</title>
        <authorList>
            <person name="Sato S."/>
            <person name="Kaneko T."/>
            <person name="Kotani H."/>
            <person name="Nakamura Y."/>
            <person name="Asamizu E."/>
            <person name="Miyajima N."/>
            <person name="Tabata S."/>
        </authorList>
    </citation>
    <scope>NUCLEOTIDE SEQUENCE [LARGE SCALE GENOMIC DNA]</scope>
</reference>
<reference key="2">
    <citation type="journal article" date="2017" name="Plant J.">
        <title>Araport11: a complete reannotation of the Arabidopsis thaliana reference genome.</title>
        <authorList>
            <person name="Cheng C.Y."/>
            <person name="Krishnakumar V."/>
            <person name="Chan A.P."/>
            <person name="Thibaud-Nissen F."/>
            <person name="Schobel S."/>
            <person name="Town C.D."/>
        </authorList>
    </citation>
    <scope>GENOME REANNOTATION</scope>
    <source>
        <strain>cv. Columbia</strain>
    </source>
</reference>
<dbReference type="EMBL" id="AB009054">
    <property type="protein sequence ID" value="BAB11019.1"/>
    <property type="molecule type" value="Genomic_DNA"/>
</dbReference>
<dbReference type="EMBL" id="CP002688">
    <property type="protein sequence ID" value="AED94435.1"/>
    <property type="molecule type" value="Genomic_DNA"/>
</dbReference>
<dbReference type="RefSeq" id="NP_198762.1">
    <property type="nucleotide sequence ID" value="NM_123308.1"/>
</dbReference>
<dbReference type="PaxDb" id="3702-AT5G39460.1"/>
<dbReference type="EnsemblPlants" id="AT5G39460.1">
    <property type="protein sequence ID" value="AT5G39460.1"/>
    <property type="gene ID" value="AT5G39460"/>
</dbReference>
<dbReference type="GeneID" id="833942"/>
<dbReference type="Gramene" id="AT5G39460.1">
    <property type="protein sequence ID" value="AT5G39460.1"/>
    <property type="gene ID" value="AT5G39460"/>
</dbReference>
<dbReference type="KEGG" id="ath:AT5G39460"/>
<dbReference type="Araport" id="AT5G39460"/>
<dbReference type="TAIR" id="AT5G39460"/>
<dbReference type="eggNOG" id="ENOG502QTKH">
    <property type="taxonomic scope" value="Eukaryota"/>
</dbReference>
<dbReference type="HOGENOM" id="CLU_033857_0_0_1"/>
<dbReference type="InParanoid" id="Q9FLZ1"/>
<dbReference type="OMA" id="YMETSYT"/>
<dbReference type="PhylomeDB" id="Q9FLZ1"/>
<dbReference type="PRO" id="PR:Q9FLZ1"/>
<dbReference type="Proteomes" id="UP000006548">
    <property type="component" value="Chromosome 5"/>
</dbReference>
<dbReference type="ExpressionAtlas" id="Q9FLZ1">
    <property type="expression patterns" value="baseline"/>
</dbReference>
<dbReference type="GO" id="GO:0099503">
    <property type="term" value="C:secretory vesicle"/>
    <property type="evidence" value="ECO:0007005"/>
    <property type="project" value="TAIR"/>
</dbReference>
<dbReference type="InterPro" id="IPR040275">
    <property type="entry name" value="At5g39450-like"/>
</dbReference>
<dbReference type="InterPro" id="IPR036047">
    <property type="entry name" value="F-box-like_dom_sf"/>
</dbReference>
<dbReference type="InterPro" id="IPR001810">
    <property type="entry name" value="F-box_dom"/>
</dbReference>
<dbReference type="PANTHER" id="PTHR31370">
    <property type="entry name" value="F-BOX PROTEIN FAMILY-LIKE"/>
    <property type="match status" value="1"/>
</dbReference>
<dbReference type="PANTHER" id="PTHR31370:SF2">
    <property type="entry name" value="OS08G0105100 PROTEIN"/>
    <property type="match status" value="1"/>
</dbReference>
<dbReference type="SUPFAM" id="SSF81383">
    <property type="entry name" value="F-box domain"/>
    <property type="match status" value="1"/>
</dbReference>
<dbReference type="PROSITE" id="PS50181">
    <property type="entry name" value="FBOX"/>
    <property type="match status" value="1"/>
</dbReference>
<keyword id="KW-1185">Reference proteome</keyword>
<sequence length="571" mass="64361">MMNKESFGACLLLTLPEDVFAVISRFLSPSDICNLILCGKSLCALVDSEKTWLVQCEEVKVLPLIELVQWRIGISSYKALCRFLVEVVKPLLGIWVQENPELGNVVYVMPGFLSVVGCRIIPQKVAPLWIQEGQVKWSPVFEIICGFDGSKGFFLHGRDKQGSFLYPGFVMDIEKSCNVLLLEVEPRSEKSSCNEIEREVGDPFGDLDFSDRMNLLDIVTKHVSLRVDEPLTGNLFPTRSKYDEAMMLERRNMLLKMLKFGGNWKHINLEEDEQLCYNHIEIDIKKLLENLGDDIDNMEDIEDQIEVTPRKKSFRRFLRSGIKHILGKFSSSKINSPSSSETRRSNRQSFLSSGNTFCLSLKASCTLMSSYEGWPIMSADNFSLHKLPMKKPLDHDVYAGLWGGTFGWPPGKDIEDESLLLLMLTYGESEEGSERILFGTKILSYFAEHPNGSSMFVVNIDTPSLEPFPFDTDGRDFEHSYTGEGIADGYGFRYPGSKPGSLFVSSNDLLAFVWQGTEDVITLQRINLGEILKKSLGSCVSPLLPTKNFTYTKRSYSNVFAKSSTYSSSSE</sequence>
<proteinExistence type="predicted"/>
<accession>Q9FLZ1</accession>
<protein>
    <recommendedName>
        <fullName>Putative F-box protein At5g39460</fullName>
    </recommendedName>
</protein>